<evidence type="ECO:0000250" key="1"/>
<evidence type="ECO:0000250" key="2">
    <source>
        <dbReference type="UniProtKB" id="P09622"/>
    </source>
</evidence>
<evidence type="ECO:0000250" key="3">
    <source>
        <dbReference type="UniProtKB" id="P09624"/>
    </source>
</evidence>
<evidence type="ECO:0000250" key="4">
    <source>
        <dbReference type="UniProtKB" id="Q6P6R2"/>
    </source>
</evidence>
<evidence type="ECO:0000250" key="5">
    <source>
        <dbReference type="UniProtKB" id="Q811C4"/>
    </source>
</evidence>
<evidence type="ECO:0000269" key="6">
    <source>
    </source>
</evidence>
<evidence type="ECO:0000269" key="7">
    <source>
    </source>
</evidence>
<evidence type="ECO:0000269" key="8">
    <source>
    </source>
</evidence>
<evidence type="ECO:0000305" key="9"/>
<evidence type="ECO:0000305" key="10">
    <source>
    </source>
</evidence>
<evidence type="ECO:0000305" key="11">
    <source>
    </source>
</evidence>
<evidence type="ECO:0007744" key="12">
    <source>
    </source>
</evidence>
<evidence type="ECO:0007744" key="13">
    <source>
    </source>
</evidence>
<evidence type="ECO:0007744" key="14">
    <source>
    </source>
</evidence>
<feature type="transit peptide" description="Mitochondrion" evidence="1">
    <location>
        <begin position="1"/>
        <end position="35"/>
    </location>
</feature>
<feature type="chain" id="PRO_0000030297" description="Dihydrolipoyl dehydrogenase, mitochondrial">
    <location>
        <begin position="36"/>
        <end position="509"/>
    </location>
</feature>
<feature type="active site" description="Proton acceptor" evidence="3">
    <location>
        <position position="487"/>
    </location>
</feature>
<feature type="binding site" evidence="2">
    <location>
        <begin position="71"/>
        <end position="80"/>
    </location>
    <ligand>
        <name>FAD</name>
        <dbReference type="ChEBI" id="CHEBI:57692"/>
    </ligand>
</feature>
<feature type="binding site" evidence="2">
    <location>
        <position position="89"/>
    </location>
    <ligand>
        <name>FAD</name>
        <dbReference type="ChEBI" id="CHEBI:57692"/>
    </ligand>
</feature>
<feature type="binding site" evidence="2">
    <location>
        <position position="154"/>
    </location>
    <ligand>
        <name>FAD</name>
        <dbReference type="ChEBI" id="CHEBI:57692"/>
    </ligand>
</feature>
<feature type="binding site" evidence="2">
    <location>
        <begin position="183"/>
        <end position="185"/>
    </location>
    <ligand>
        <name>FAD</name>
        <dbReference type="ChEBI" id="CHEBI:57692"/>
    </ligand>
</feature>
<feature type="binding site" evidence="2">
    <location>
        <begin position="220"/>
        <end position="227"/>
    </location>
    <ligand>
        <name>NAD(+)</name>
        <dbReference type="ChEBI" id="CHEBI:57540"/>
    </ligand>
</feature>
<feature type="binding site" evidence="2">
    <location>
        <position position="243"/>
    </location>
    <ligand>
        <name>NAD(+)</name>
        <dbReference type="ChEBI" id="CHEBI:57540"/>
    </ligand>
</feature>
<feature type="binding site" evidence="2">
    <location>
        <position position="278"/>
    </location>
    <ligand>
        <name>NAD(+)</name>
        <dbReference type="ChEBI" id="CHEBI:57540"/>
    </ligand>
</feature>
<feature type="binding site" evidence="2">
    <location>
        <position position="314"/>
    </location>
    <ligand>
        <name>NAD(+)</name>
        <dbReference type="ChEBI" id="CHEBI:57540"/>
    </ligand>
</feature>
<feature type="binding site" evidence="2">
    <location>
        <position position="355"/>
    </location>
    <ligand>
        <name>FAD</name>
        <dbReference type="ChEBI" id="CHEBI:57692"/>
    </ligand>
</feature>
<feature type="binding site" evidence="2">
    <location>
        <begin position="361"/>
        <end position="364"/>
    </location>
    <ligand>
        <name>FAD</name>
        <dbReference type="ChEBI" id="CHEBI:57692"/>
    </ligand>
</feature>
<feature type="site" description="Important for interaction with PDHX and activity of pyruvate dehydrogenase complex" evidence="2">
    <location>
        <position position="448"/>
    </location>
</feature>
<feature type="site" description="Important for interaction with PDHX and activity of pyruvate dehydrogenase complex" evidence="2">
    <location>
        <position position="473"/>
    </location>
</feature>
<feature type="modified residue" description="N6-acetyllysine; alternate" evidence="13 14">
    <location>
        <position position="66"/>
    </location>
</feature>
<feature type="modified residue" description="N6-succinyllysine; alternate" evidence="14">
    <location>
        <position position="66"/>
    </location>
</feature>
<feature type="modified residue" description="N6-acetyllysine; alternate" evidence="13">
    <location>
        <position position="104"/>
    </location>
</feature>
<feature type="modified residue" description="N6-succinyllysine; alternate" evidence="14">
    <location>
        <position position="104"/>
    </location>
</feature>
<feature type="modified residue" description="N6-acetyllysine; alternate" evidence="13">
    <location>
        <position position="122"/>
    </location>
</feature>
<feature type="modified residue" description="N6-succinyllysine; alternate" evidence="14">
    <location>
        <position position="122"/>
    </location>
</feature>
<feature type="modified residue" description="N6-acetyllysine; alternate" evidence="13">
    <location>
        <position position="132"/>
    </location>
</feature>
<feature type="modified residue" description="N6-succinyllysine; alternate" evidence="14">
    <location>
        <position position="132"/>
    </location>
</feature>
<feature type="modified residue" description="N6-acetyllysine; alternate" evidence="13">
    <location>
        <position position="143"/>
    </location>
</feature>
<feature type="modified residue" description="N6-succinyllysine; alternate" evidence="14">
    <location>
        <position position="143"/>
    </location>
</feature>
<feature type="modified residue" description="N6-succinyllysine" evidence="14">
    <location>
        <position position="159"/>
    </location>
</feature>
<feature type="modified residue" description="N6-succinyllysine" evidence="14">
    <location>
        <position position="166"/>
    </location>
</feature>
<feature type="modified residue" description="N6-succinyllysine" evidence="14">
    <location>
        <position position="273"/>
    </location>
</feature>
<feature type="modified residue" description="N6-succinyllysine" evidence="14">
    <location>
        <position position="277"/>
    </location>
</feature>
<feature type="modified residue" description="Phosphoserine" evidence="12">
    <location>
        <position position="285"/>
    </location>
</feature>
<feature type="modified residue" description="Phosphoserine" evidence="4">
    <location>
        <position position="297"/>
    </location>
</feature>
<feature type="modified residue" description="N6-acetyllysine; alternate" evidence="13">
    <location>
        <position position="334"/>
    </location>
</feature>
<feature type="modified residue" description="N6-succinyllysine; alternate" evidence="14">
    <location>
        <position position="334"/>
    </location>
</feature>
<feature type="modified residue" description="N6-acetyllysine" evidence="13">
    <location>
        <position position="346"/>
    </location>
</feature>
<feature type="modified residue" description="N6-acetyllysine; alternate" evidence="13 14">
    <location>
        <position position="410"/>
    </location>
</feature>
<feature type="modified residue" description="N6-succinyllysine; alternate" evidence="14">
    <location>
        <position position="410"/>
    </location>
</feature>
<feature type="modified residue" description="N6-acetyllysine" evidence="2">
    <location>
        <position position="417"/>
    </location>
</feature>
<feature type="modified residue" description="N6-acetyllysine" evidence="13">
    <location>
        <position position="420"/>
    </location>
</feature>
<feature type="modified residue" description="N6-succinyllysine" evidence="14">
    <location>
        <position position="430"/>
    </location>
</feature>
<feature type="modified residue" description="N6-acetyllysine; alternate" evidence="13">
    <location>
        <position position="505"/>
    </location>
</feature>
<feature type="modified residue" description="N6-succinyllysine; alternate" evidence="14">
    <location>
        <position position="505"/>
    </location>
</feature>
<feature type="disulfide bond" description="Redox-active" evidence="3">
    <location>
        <begin position="80"/>
        <end position="85"/>
    </location>
</feature>
<feature type="sequence conflict" description="In Ref. 1; AAC53170." evidence="9" ref="1">
    <original>Y</original>
    <variation>C</variation>
    <location>
        <position position="54"/>
    </location>
</feature>
<feature type="sequence conflict" description="In Ref. 2; BAE22867." evidence="9" ref="2">
    <original>Q</original>
    <variation>T</variation>
    <location>
        <position position="144"/>
    </location>
</feature>
<feature type="sequence conflict" description="In Ref. 2; BAE31961." evidence="9" ref="2">
    <original>H</original>
    <variation>L</variation>
    <location>
        <position position="149"/>
    </location>
</feature>
<feature type="sequence conflict" description="In Ref. 2; BAE40693." evidence="9" ref="2">
    <original>K</original>
    <variation>E</variation>
    <location>
        <position position="283"/>
    </location>
</feature>
<protein>
    <recommendedName>
        <fullName>Dihydrolipoyl dehydrogenase, mitochondrial</fullName>
        <ecNumber evidence="2">1.8.1.4</ecNumber>
    </recommendedName>
    <alternativeName>
        <fullName>Dihydrolipoamide dehydrogenase</fullName>
    </alternativeName>
</protein>
<proteinExistence type="evidence at protein level"/>
<reference key="1">
    <citation type="journal article" date="1997" name="Genomics">
        <title>Characterization of the mouse dihydrolipoamide dehydrogenase (Dld) gene: genomic structure, promoter sequence, and chromosomal localization.</title>
        <authorList>
            <person name="Johnson M."/>
            <person name="Yang H.S."/>
            <person name="Johanning G.L."/>
            <person name="Patel M.S."/>
        </authorList>
    </citation>
    <scope>NUCLEOTIDE SEQUENCE [MRNA]</scope>
    <source>
        <strain>DBA/2J</strain>
    </source>
</reference>
<reference key="2">
    <citation type="journal article" date="2005" name="Science">
        <title>The transcriptional landscape of the mammalian genome.</title>
        <authorList>
            <person name="Carninci P."/>
            <person name="Kasukawa T."/>
            <person name="Katayama S."/>
            <person name="Gough J."/>
            <person name="Frith M.C."/>
            <person name="Maeda N."/>
            <person name="Oyama R."/>
            <person name="Ravasi T."/>
            <person name="Lenhard B."/>
            <person name="Wells C."/>
            <person name="Kodzius R."/>
            <person name="Shimokawa K."/>
            <person name="Bajic V.B."/>
            <person name="Brenner S.E."/>
            <person name="Batalov S."/>
            <person name="Forrest A.R."/>
            <person name="Zavolan M."/>
            <person name="Davis M.J."/>
            <person name="Wilming L.G."/>
            <person name="Aidinis V."/>
            <person name="Allen J.E."/>
            <person name="Ambesi-Impiombato A."/>
            <person name="Apweiler R."/>
            <person name="Aturaliya R.N."/>
            <person name="Bailey T.L."/>
            <person name="Bansal M."/>
            <person name="Baxter L."/>
            <person name="Beisel K.W."/>
            <person name="Bersano T."/>
            <person name="Bono H."/>
            <person name="Chalk A.M."/>
            <person name="Chiu K.P."/>
            <person name="Choudhary V."/>
            <person name="Christoffels A."/>
            <person name="Clutterbuck D.R."/>
            <person name="Crowe M.L."/>
            <person name="Dalla E."/>
            <person name="Dalrymple B.P."/>
            <person name="de Bono B."/>
            <person name="Della Gatta G."/>
            <person name="di Bernardo D."/>
            <person name="Down T."/>
            <person name="Engstrom P."/>
            <person name="Fagiolini M."/>
            <person name="Faulkner G."/>
            <person name="Fletcher C.F."/>
            <person name="Fukushima T."/>
            <person name="Furuno M."/>
            <person name="Futaki S."/>
            <person name="Gariboldi M."/>
            <person name="Georgii-Hemming P."/>
            <person name="Gingeras T.R."/>
            <person name="Gojobori T."/>
            <person name="Green R.E."/>
            <person name="Gustincich S."/>
            <person name="Harbers M."/>
            <person name="Hayashi Y."/>
            <person name="Hensch T.K."/>
            <person name="Hirokawa N."/>
            <person name="Hill D."/>
            <person name="Huminiecki L."/>
            <person name="Iacono M."/>
            <person name="Ikeo K."/>
            <person name="Iwama A."/>
            <person name="Ishikawa T."/>
            <person name="Jakt M."/>
            <person name="Kanapin A."/>
            <person name="Katoh M."/>
            <person name="Kawasawa Y."/>
            <person name="Kelso J."/>
            <person name="Kitamura H."/>
            <person name="Kitano H."/>
            <person name="Kollias G."/>
            <person name="Krishnan S.P."/>
            <person name="Kruger A."/>
            <person name="Kummerfeld S.K."/>
            <person name="Kurochkin I.V."/>
            <person name="Lareau L.F."/>
            <person name="Lazarevic D."/>
            <person name="Lipovich L."/>
            <person name="Liu J."/>
            <person name="Liuni S."/>
            <person name="McWilliam S."/>
            <person name="Madan Babu M."/>
            <person name="Madera M."/>
            <person name="Marchionni L."/>
            <person name="Matsuda H."/>
            <person name="Matsuzawa S."/>
            <person name="Miki H."/>
            <person name="Mignone F."/>
            <person name="Miyake S."/>
            <person name="Morris K."/>
            <person name="Mottagui-Tabar S."/>
            <person name="Mulder N."/>
            <person name="Nakano N."/>
            <person name="Nakauchi H."/>
            <person name="Ng P."/>
            <person name="Nilsson R."/>
            <person name="Nishiguchi S."/>
            <person name="Nishikawa S."/>
            <person name="Nori F."/>
            <person name="Ohara O."/>
            <person name="Okazaki Y."/>
            <person name="Orlando V."/>
            <person name="Pang K.C."/>
            <person name="Pavan W.J."/>
            <person name="Pavesi G."/>
            <person name="Pesole G."/>
            <person name="Petrovsky N."/>
            <person name="Piazza S."/>
            <person name="Reed J."/>
            <person name="Reid J.F."/>
            <person name="Ring B.Z."/>
            <person name="Ringwald M."/>
            <person name="Rost B."/>
            <person name="Ruan Y."/>
            <person name="Salzberg S.L."/>
            <person name="Sandelin A."/>
            <person name="Schneider C."/>
            <person name="Schoenbach C."/>
            <person name="Sekiguchi K."/>
            <person name="Semple C.A."/>
            <person name="Seno S."/>
            <person name="Sessa L."/>
            <person name="Sheng Y."/>
            <person name="Shibata Y."/>
            <person name="Shimada H."/>
            <person name="Shimada K."/>
            <person name="Silva D."/>
            <person name="Sinclair B."/>
            <person name="Sperling S."/>
            <person name="Stupka E."/>
            <person name="Sugiura K."/>
            <person name="Sultana R."/>
            <person name="Takenaka Y."/>
            <person name="Taki K."/>
            <person name="Tammoja K."/>
            <person name="Tan S.L."/>
            <person name="Tang S."/>
            <person name="Taylor M.S."/>
            <person name="Tegner J."/>
            <person name="Teichmann S.A."/>
            <person name="Ueda H.R."/>
            <person name="van Nimwegen E."/>
            <person name="Verardo R."/>
            <person name="Wei C.L."/>
            <person name="Yagi K."/>
            <person name="Yamanishi H."/>
            <person name="Zabarovsky E."/>
            <person name="Zhu S."/>
            <person name="Zimmer A."/>
            <person name="Hide W."/>
            <person name="Bult C."/>
            <person name="Grimmond S.M."/>
            <person name="Teasdale R.D."/>
            <person name="Liu E.T."/>
            <person name="Brusic V."/>
            <person name="Quackenbush J."/>
            <person name="Wahlestedt C."/>
            <person name="Mattick J.S."/>
            <person name="Hume D.A."/>
            <person name="Kai C."/>
            <person name="Sasaki D."/>
            <person name="Tomaru Y."/>
            <person name="Fukuda S."/>
            <person name="Kanamori-Katayama M."/>
            <person name="Suzuki M."/>
            <person name="Aoki J."/>
            <person name="Arakawa T."/>
            <person name="Iida J."/>
            <person name="Imamura K."/>
            <person name="Itoh M."/>
            <person name="Kato T."/>
            <person name="Kawaji H."/>
            <person name="Kawagashira N."/>
            <person name="Kawashima T."/>
            <person name="Kojima M."/>
            <person name="Kondo S."/>
            <person name="Konno H."/>
            <person name="Nakano K."/>
            <person name="Ninomiya N."/>
            <person name="Nishio T."/>
            <person name="Okada M."/>
            <person name="Plessy C."/>
            <person name="Shibata K."/>
            <person name="Shiraki T."/>
            <person name="Suzuki S."/>
            <person name="Tagami M."/>
            <person name="Waki K."/>
            <person name="Watahiki A."/>
            <person name="Okamura-Oho Y."/>
            <person name="Suzuki H."/>
            <person name="Kawai J."/>
            <person name="Hayashizaki Y."/>
        </authorList>
    </citation>
    <scope>NUCLEOTIDE SEQUENCE [LARGE SCALE MRNA]</scope>
    <source>
        <strain>C57BL/6J</strain>
        <tissue>Bone marrow</tissue>
        <tissue>Heart</tissue>
    </source>
</reference>
<reference key="3">
    <citation type="journal article" date="2004" name="Genome Res.">
        <title>The status, quality, and expansion of the NIH full-length cDNA project: the Mammalian Gene Collection (MGC).</title>
        <authorList>
            <consortium name="The MGC Project Team"/>
        </authorList>
    </citation>
    <scope>NUCLEOTIDE SEQUENCE [LARGE SCALE MRNA]</scope>
    <source>
        <strain>Czech II</strain>
        <tissue>Mammary tumor</tissue>
    </source>
</reference>
<reference key="4">
    <citation type="submission" date="2007-04" db="UniProtKB">
        <authorList>
            <person name="Lubec G."/>
            <person name="Klug S."/>
            <person name="Kang S.U."/>
        </authorList>
    </citation>
    <scope>PROTEIN SEQUENCE OF 73-89; 216-259; 289-334; 316-334; 347-365; 421-428 AND 483-509</scope>
    <scope>IDENTIFICATION BY MASS SPECTROMETRY</scope>
    <source>
        <strain>C57BL/6J</strain>
        <tissue>Brain</tissue>
        <tissue>Hippocampus</tissue>
    </source>
</reference>
<reference key="5">
    <citation type="journal article" date="2005" name="J. Biol. Chem.">
        <title>Novelty of the pyruvate metabolic enzyme dihydrolipoamide dehydrogenase in spermatozoa: correlation of its localization, tyrosine phosphorylation, and activity during sperm capacitation.</title>
        <authorList>
            <person name="Mitra K."/>
            <person name="Rangaraj N."/>
            <person name="Shivaji S."/>
        </authorList>
    </citation>
    <scope>SUBCELLULAR LOCATION</scope>
</reference>
<reference key="6">
    <citation type="journal article" date="2007" name="Proc. Natl. Acad. Sci. U.S.A.">
        <title>Cryptic proteolytic activity of dihydrolipoamide dehydrogenase.</title>
        <authorList>
            <person name="Babady N.E."/>
            <person name="Pang Y.P."/>
            <person name="Elpeleg O."/>
            <person name="Isaya G."/>
        </authorList>
    </citation>
    <scope>FUNCTION</scope>
    <scope>TISSUE SPECIFICITY</scope>
</reference>
<reference key="7">
    <citation type="journal article" date="2010" name="Cell">
        <title>A tissue-specific atlas of mouse protein phosphorylation and expression.</title>
        <authorList>
            <person name="Huttlin E.L."/>
            <person name="Jedrychowski M.P."/>
            <person name="Elias J.E."/>
            <person name="Goswami T."/>
            <person name="Rad R."/>
            <person name="Beausoleil S.A."/>
            <person name="Villen J."/>
            <person name="Haas W."/>
            <person name="Sowa M.E."/>
            <person name="Gygi S.P."/>
        </authorList>
    </citation>
    <scope>PHOSPHORYLATION [LARGE SCALE ANALYSIS] AT SER-285</scope>
    <scope>IDENTIFICATION BY MASS SPECTROMETRY [LARGE SCALE ANALYSIS]</scope>
    <source>
        <tissue>Brain</tissue>
        <tissue>Brown adipose tissue</tissue>
        <tissue>Heart</tissue>
        <tissue>Kidney</tissue>
        <tissue>Liver</tissue>
        <tissue>Lung</tissue>
        <tissue>Pancreas</tissue>
        <tissue>Spleen</tissue>
        <tissue>Testis</tissue>
    </source>
</reference>
<reference key="8">
    <citation type="journal article" date="2013" name="Mol. Cell">
        <title>SIRT5-mediated lysine desuccinylation impacts diverse metabolic pathways.</title>
        <authorList>
            <person name="Park J."/>
            <person name="Chen Y."/>
            <person name="Tishkoff D.X."/>
            <person name="Peng C."/>
            <person name="Tan M."/>
            <person name="Dai L."/>
            <person name="Xie Z."/>
            <person name="Zhang Y."/>
            <person name="Zwaans B.M."/>
            <person name="Skinner M.E."/>
            <person name="Lombard D.B."/>
            <person name="Zhao Y."/>
        </authorList>
    </citation>
    <scope>ACETYLATION [LARGE SCALE ANALYSIS] AT LYS-66 AND LYS-410</scope>
    <scope>SUCCINYLATION [LARGE SCALE ANALYSIS] AT LYS-66; LYS-104; LYS-122; LYS-132; LYS-143; LYS-159; LYS-166; LYS-273; LYS-277; LYS-334; LYS-410; LYS-430 AND LYS-505</scope>
    <scope>IDENTIFICATION BY MASS SPECTROMETRY [LARGE SCALE ANALYSIS]</scope>
    <source>
        <tissue>Embryonic fibroblast</tissue>
        <tissue>Liver</tissue>
    </source>
</reference>
<reference key="9">
    <citation type="journal article" date="2013" name="Proc. Natl. Acad. Sci. U.S.A.">
        <title>Label-free quantitative proteomics of the lysine acetylome in mitochondria identifies substrates of SIRT3 in metabolic pathways.</title>
        <authorList>
            <person name="Rardin M.J."/>
            <person name="Newman J.C."/>
            <person name="Held J.M."/>
            <person name="Cusack M.P."/>
            <person name="Sorensen D.J."/>
            <person name="Li B."/>
            <person name="Schilling B."/>
            <person name="Mooney S.D."/>
            <person name="Kahn C.R."/>
            <person name="Verdin E."/>
            <person name="Gibson B.W."/>
        </authorList>
    </citation>
    <scope>ACETYLATION [LARGE SCALE ANALYSIS] AT LYS-66; LYS-104; LYS-122; LYS-132; LYS-143; LYS-334; LYS-346; LYS-410; LYS-420 AND LYS-505</scope>
    <scope>IDENTIFICATION BY MASS SPECTROMETRY [LARGE SCALE ANALYSIS]</scope>
    <source>
        <tissue>Liver</tissue>
    </source>
</reference>
<reference key="10">
    <citation type="journal article" date="2023" name="Open Biol.">
        <title>MRPS36 provides a structural link in the eukaryotic 2-oxoglutarate dehydrogenase complex.</title>
        <authorList>
            <person name="Hevler J.F."/>
            <person name="Albanese P."/>
            <person name="Cabrera-Orefice A."/>
            <person name="Potter A."/>
            <person name="Jankevics A."/>
            <person name="Misic J."/>
            <person name="Scheltema R.A."/>
            <person name="Brandt U."/>
            <person name="Arnold S."/>
            <person name="Heck A.J.R."/>
        </authorList>
    </citation>
    <scope>SUBCELLULAR LOCATION</scope>
    <scope>SUBUNIT</scope>
</reference>
<gene>
    <name type="primary">Dld</name>
</gene>
<organism>
    <name type="scientific">Mus musculus</name>
    <name type="common">Mouse</name>
    <dbReference type="NCBI Taxonomy" id="10090"/>
    <lineage>
        <taxon>Eukaryota</taxon>
        <taxon>Metazoa</taxon>
        <taxon>Chordata</taxon>
        <taxon>Craniata</taxon>
        <taxon>Vertebrata</taxon>
        <taxon>Euteleostomi</taxon>
        <taxon>Mammalia</taxon>
        <taxon>Eutheria</taxon>
        <taxon>Euarchontoglires</taxon>
        <taxon>Glires</taxon>
        <taxon>Rodentia</taxon>
        <taxon>Myomorpha</taxon>
        <taxon>Muroidea</taxon>
        <taxon>Muridae</taxon>
        <taxon>Murinae</taxon>
        <taxon>Mus</taxon>
        <taxon>Mus</taxon>
    </lineage>
</organism>
<dbReference type="EC" id="1.8.1.4" evidence="2"/>
<dbReference type="EMBL" id="U73445">
    <property type="protein sequence ID" value="AAC53170.1"/>
    <property type="molecule type" value="mRNA"/>
</dbReference>
<dbReference type="EMBL" id="AK117104">
    <property type="protein sequence ID" value="BAE43405.1"/>
    <property type="molecule type" value="mRNA"/>
</dbReference>
<dbReference type="EMBL" id="AK136193">
    <property type="protein sequence ID" value="BAE22867.1"/>
    <property type="molecule type" value="mRNA"/>
</dbReference>
<dbReference type="EMBL" id="AK153399">
    <property type="protein sequence ID" value="BAE31961.1"/>
    <property type="molecule type" value="mRNA"/>
</dbReference>
<dbReference type="EMBL" id="AK168875">
    <property type="protein sequence ID" value="BAE40693.1"/>
    <property type="molecule type" value="mRNA"/>
</dbReference>
<dbReference type="EMBL" id="BC003368">
    <property type="protein sequence ID" value="AAH03368.1"/>
    <property type="molecule type" value="mRNA"/>
</dbReference>
<dbReference type="CCDS" id="CCDS36428.1"/>
<dbReference type="RefSeq" id="NP_031887.2">
    <property type="nucleotide sequence ID" value="NM_007861.5"/>
</dbReference>
<dbReference type="SMR" id="O08749"/>
<dbReference type="BioGRID" id="199227">
    <property type="interactions" value="76"/>
</dbReference>
<dbReference type="FunCoup" id="O08749">
    <property type="interactions" value="2062"/>
</dbReference>
<dbReference type="IntAct" id="O08749">
    <property type="interactions" value="37"/>
</dbReference>
<dbReference type="MINT" id="O08749"/>
<dbReference type="STRING" id="10090.ENSMUSP00000106481"/>
<dbReference type="ChEMBL" id="CHEMBL2176826"/>
<dbReference type="GlyGen" id="O08749">
    <property type="glycosylation" value="2 sites, 1 N-linked glycan (1 site), 1 O-linked glycan (1 site)"/>
</dbReference>
<dbReference type="iPTMnet" id="O08749"/>
<dbReference type="MetOSite" id="O08749"/>
<dbReference type="PhosphoSitePlus" id="O08749"/>
<dbReference type="SwissPalm" id="O08749"/>
<dbReference type="REPRODUCTION-2DPAGE" id="O08749"/>
<dbReference type="CPTAC" id="non-CPTAC-3704"/>
<dbReference type="jPOST" id="O08749"/>
<dbReference type="PaxDb" id="10090-ENSMUSP00000106481"/>
<dbReference type="PeptideAtlas" id="O08749"/>
<dbReference type="ProteomicsDB" id="277461"/>
<dbReference type="Pumba" id="O08749"/>
<dbReference type="Antibodypedia" id="17237">
    <property type="antibodies" value="533 antibodies from 36 providers"/>
</dbReference>
<dbReference type="DNASU" id="13382"/>
<dbReference type="Ensembl" id="ENSMUST00000110857.5">
    <property type="protein sequence ID" value="ENSMUSP00000106481.4"/>
    <property type="gene ID" value="ENSMUSG00000020664.11"/>
</dbReference>
<dbReference type="GeneID" id="13382"/>
<dbReference type="KEGG" id="mmu:13382"/>
<dbReference type="UCSC" id="uc007nhg.3">
    <property type="organism name" value="mouse"/>
</dbReference>
<dbReference type="AGR" id="MGI:107450"/>
<dbReference type="CTD" id="1738"/>
<dbReference type="MGI" id="MGI:107450">
    <property type="gene designation" value="Dld"/>
</dbReference>
<dbReference type="VEuPathDB" id="HostDB:ENSMUSG00000020664"/>
<dbReference type="eggNOG" id="KOG1335">
    <property type="taxonomic scope" value="Eukaryota"/>
</dbReference>
<dbReference type="GeneTree" id="ENSGT00550000074844"/>
<dbReference type="HOGENOM" id="CLU_016755_0_1_1"/>
<dbReference type="InParanoid" id="O08749"/>
<dbReference type="OMA" id="CAQLGMK"/>
<dbReference type="OrthoDB" id="361797at2759"/>
<dbReference type="PhylomeDB" id="O08749"/>
<dbReference type="TreeFam" id="TF300414"/>
<dbReference type="BRENDA" id="1.4.1.27">
    <property type="organism ID" value="3474"/>
</dbReference>
<dbReference type="Reactome" id="R-MMU-204174">
    <property type="pathway name" value="Regulation of pyruvate dehydrogenase (PDH) complex"/>
</dbReference>
<dbReference type="Reactome" id="R-MMU-5362517">
    <property type="pathway name" value="Signaling by Retinoic Acid"/>
</dbReference>
<dbReference type="Reactome" id="R-MMU-6783984">
    <property type="pathway name" value="Glycine degradation"/>
</dbReference>
<dbReference type="Reactome" id="R-MMU-70895">
    <property type="pathway name" value="Branched-chain amino acid catabolism"/>
</dbReference>
<dbReference type="Reactome" id="R-MMU-9837999">
    <property type="pathway name" value="Mitochondrial protein degradation"/>
</dbReference>
<dbReference type="Reactome" id="R-MMU-9853506">
    <property type="pathway name" value="OGDH complex synthesizes succinyl-CoA from 2-OG"/>
</dbReference>
<dbReference type="Reactome" id="R-MMU-9858328">
    <property type="pathway name" value="OADH complex synthesizes glutaryl-CoA from 2-OA"/>
</dbReference>
<dbReference type="Reactome" id="R-MMU-9859138">
    <property type="pathway name" value="BCKDH synthesizes BCAA-CoA from KIC, KMVA, KIV"/>
</dbReference>
<dbReference type="Reactome" id="R-MMU-9861559">
    <property type="pathway name" value="PDH complex synthesizes acetyl-CoA from PYR"/>
</dbReference>
<dbReference type="BioGRID-ORCS" id="13382">
    <property type="hits" value="24 hits in 81 CRISPR screens"/>
</dbReference>
<dbReference type="CD-CODE" id="CE726F99">
    <property type="entry name" value="Postsynaptic density"/>
</dbReference>
<dbReference type="ChiTaRS" id="Dld">
    <property type="organism name" value="mouse"/>
</dbReference>
<dbReference type="PRO" id="PR:O08749"/>
<dbReference type="Proteomes" id="UP000000589">
    <property type="component" value="Chromosome 12"/>
</dbReference>
<dbReference type="RNAct" id="O08749">
    <property type="molecule type" value="protein"/>
</dbReference>
<dbReference type="Bgee" id="ENSMUSG00000020664">
    <property type="expression patterns" value="Expressed in saccule of membranous labyrinth and 284 other cell types or tissues"/>
</dbReference>
<dbReference type="GO" id="GO:1902493">
    <property type="term" value="C:acetyltransferase complex"/>
    <property type="evidence" value="ECO:0000315"/>
    <property type="project" value="MGI"/>
</dbReference>
<dbReference type="GO" id="GO:0043159">
    <property type="term" value="C:acrosomal matrix"/>
    <property type="evidence" value="ECO:0000314"/>
    <property type="project" value="MGI"/>
</dbReference>
<dbReference type="GO" id="GO:0160157">
    <property type="term" value="C:branched-chain alpha-ketoacid dehydrogenase complex"/>
    <property type="evidence" value="ECO:0007669"/>
    <property type="project" value="Ensembl"/>
</dbReference>
<dbReference type="GO" id="GO:0005929">
    <property type="term" value="C:cilium"/>
    <property type="evidence" value="ECO:0000314"/>
    <property type="project" value="MGI"/>
</dbReference>
<dbReference type="GO" id="GO:0005759">
    <property type="term" value="C:mitochondrial matrix"/>
    <property type="evidence" value="ECO:0000314"/>
    <property type="project" value="MGI"/>
</dbReference>
<dbReference type="GO" id="GO:0005739">
    <property type="term" value="C:mitochondrion"/>
    <property type="evidence" value="ECO:0000314"/>
    <property type="project" value="MGI"/>
</dbReference>
<dbReference type="GO" id="GO:0031514">
    <property type="term" value="C:motile cilium"/>
    <property type="evidence" value="ECO:0007669"/>
    <property type="project" value="UniProtKB-SubCell"/>
</dbReference>
<dbReference type="GO" id="GO:0043209">
    <property type="term" value="C:myelin sheath"/>
    <property type="evidence" value="ECO:0007005"/>
    <property type="project" value="UniProtKB"/>
</dbReference>
<dbReference type="GO" id="GO:0005634">
    <property type="term" value="C:nucleus"/>
    <property type="evidence" value="ECO:0000250"/>
    <property type="project" value="UniProtKB"/>
</dbReference>
<dbReference type="GO" id="GO:0160167">
    <property type="term" value="C:oxoadipate dehydrogenase complex"/>
    <property type="evidence" value="ECO:0007669"/>
    <property type="project" value="Ensembl"/>
</dbReference>
<dbReference type="GO" id="GO:0045252">
    <property type="term" value="C:oxoglutarate dehydrogenase complex"/>
    <property type="evidence" value="ECO:0000250"/>
    <property type="project" value="UniProtKB"/>
</dbReference>
<dbReference type="GO" id="GO:0045254">
    <property type="term" value="C:pyruvate dehydrogenase complex"/>
    <property type="evidence" value="ECO:0000315"/>
    <property type="project" value="MGI"/>
</dbReference>
<dbReference type="GO" id="GO:0047101">
    <property type="term" value="F:branched-chain alpha-keto acid dehydrogenase activity"/>
    <property type="evidence" value="ECO:0007669"/>
    <property type="project" value="Ensembl"/>
</dbReference>
<dbReference type="GO" id="GO:0004148">
    <property type="term" value="F:dihydrolipoyl dehydrogenase (NADH) activity"/>
    <property type="evidence" value="ECO:0000315"/>
    <property type="project" value="MGI"/>
</dbReference>
<dbReference type="GO" id="GO:0050660">
    <property type="term" value="F:flavin adenine dinucleotide binding"/>
    <property type="evidence" value="ECO:0007669"/>
    <property type="project" value="InterPro"/>
</dbReference>
<dbReference type="GO" id="GO:0034604">
    <property type="term" value="F:pyruvate dehydrogenase (NAD+) activity"/>
    <property type="evidence" value="ECO:0007669"/>
    <property type="project" value="Ensembl"/>
</dbReference>
<dbReference type="GO" id="GO:0009083">
    <property type="term" value="P:branched-chain amino acid catabolic process"/>
    <property type="evidence" value="ECO:0007669"/>
    <property type="project" value="Ensembl"/>
</dbReference>
<dbReference type="GO" id="GO:0007369">
    <property type="term" value="P:gastrulation"/>
    <property type="evidence" value="ECO:0000315"/>
    <property type="project" value="MGI"/>
</dbReference>
<dbReference type="GO" id="GO:0006120">
    <property type="term" value="P:mitochondrial electron transport, NADH to ubiquinone"/>
    <property type="evidence" value="ECO:0000315"/>
    <property type="project" value="MGI"/>
</dbReference>
<dbReference type="GO" id="GO:0006508">
    <property type="term" value="P:proteolysis"/>
    <property type="evidence" value="ECO:0000314"/>
    <property type="project" value="MGI"/>
</dbReference>
<dbReference type="GO" id="GO:0006086">
    <property type="term" value="P:pyruvate decarboxylation to acetyl-CoA"/>
    <property type="evidence" value="ECO:0000315"/>
    <property type="project" value="MGI"/>
</dbReference>
<dbReference type="GO" id="GO:0042391">
    <property type="term" value="P:regulation of membrane potential"/>
    <property type="evidence" value="ECO:0000315"/>
    <property type="project" value="MGI"/>
</dbReference>
<dbReference type="GO" id="GO:0048240">
    <property type="term" value="P:sperm capacitation"/>
    <property type="evidence" value="ECO:0000314"/>
    <property type="project" value="MGI"/>
</dbReference>
<dbReference type="FunFam" id="3.30.390.30:FF:000001">
    <property type="entry name" value="Dihydrolipoyl dehydrogenase"/>
    <property type="match status" value="1"/>
</dbReference>
<dbReference type="FunFam" id="3.50.50.60:FF:000025">
    <property type="entry name" value="Dihydrolipoyl dehydrogenase"/>
    <property type="match status" value="1"/>
</dbReference>
<dbReference type="FunFam" id="3.50.50.60:FF:000221">
    <property type="entry name" value="Dihydrolipoyl dehydrogenase, mitochondrial"/>
    <property type="match status" value="1"/>
</dbReference>
<dbReference type="Gene3D" id="3.30.390.30">
    <property type="match status" value="1"/>
</dbReference>
<dbReference type="Gene3D" id="3.50.50.60">
    <property type="entry name" value="FAD/NAD(P)-binding domain"/>
    <property type="match status" value="2"/>
</dbReference>
<dbReference type="InterPro" id="IPR050151">
    <property type="entry name" value="Class-I_Pyr_Nuc-Dis_Oxidored"/>
</dbReference>
<dbReference type="InterPro" id="IPR036188">
    <property type="entry name" value="FAD/NAD-bd_sf"/>
</dbReference>
<dbReference type="InterPro" id="IPR023753">
    <property type="entry name" value="FAD/NAD-binding_dom"/>
</dbReference>
<dbReference type="InterPro" id="IPR016156">
    <property type="entry name" value="FAD/NAD-linked_Rdtase_dimer_sf"/>
</dbReference>
<dbReference type="InterPro" id="IPR006258">
    <property type="entry name" value="Lipoamide_DH"/>
</dbReference>
<dbReference type="InterPro" id="IPR001100">
    <property type="entry name" value="Pyr_nuc-diS_OxRdtase"/>
</dbReference>
<dbReference type="InterPro" id="IPR004099">
    <property type="entry name" value="Pyr_nucl-diS_OxRdtase_dimer"/>
</dbReference>
<dbReference type="InterPro" id="IPR012999">
    <property type="entry name" value="Pyr_OxRdtase_I_AS"/>
</dbReference>
<dbReference type="NCBIfam" id="TIGR01350">
    <property type="entry name" value="lipoamide_DH"/>
    <property type="match status" value="1"/>
</dbReference>
<dbReference type="PANTHER" id="PTHR22912:SF151">
    <property type="entry name" value="DIHYDROLIPOYL DEHYDROGENASE, MITOCHONDRIAL"/>
    <property type="match status" value="1"/>
</dbReference>
<dbReference type="PANTHER" id="PTHR22912">
    <property type="entry name" value="DISULFIDE OXIDOREDUCTASE"/>
    <property type="match status" value="1"/>
</dbReference>
<dbReference type="Pfam" id="PF07992">
    <property type="entry name" value="Pyr_redox_2"/>
    <property type="match status" value="1"/>
</dbReference>
<dbReference type="Pfam" id="PF02852">
    <property type="entry name" value="Pyr_redox_dim"/>
    <property type="match status" value="1"/>
</dbReference>
<dbReference type="PIRSF" id="PIRSF000350">
    <property type="entry name" value="Mercury_reductase_MerA"/>
    <property type="match status" value="1"/>
</dbReference>
<dbReference type="PRINTS" id="PR00368">
    <property type="entry name" value="FADPNR"/>
</dbReference>
<dbReference type="PRINTS" id="PR00411">
    <property type="entry name" value="PNDRDTASEI"/>
</dbReference>
<dbReference type="SUPFAM" id="SSF51905">
    <property type="entry name" value="FAD/NAD(P)-binding domain"/>
    <property type="match status" value="1"/>
</dbReference>
<dbReference type="SUPFAM" id="SSF55424">
    <property type="entry name" value="FAD/NAD-linked reductases, dimerisation (C-terminal) domain"/>
    <property type="match status" value="1"/>
</dbReference>
<dbReference type="PROSITE" id="PS00076">
    <property type="entry name" value="PYRIDINE_REDOX_1"/>
    <property type="match status" value="1"/>
</dbReference>
<accession>O08749</accession>
<accession>Q3TG55</accession>
<accession>Q3U5W5</accession>
<accession>Q3UWP7</accession>
<accession>Q99LD3</accession>
<comment type="function">
    <text evidence="2 5 7">Lipoamide dehydrogenase is a component of the glycine cleavage system as well as an E3 component of three alpha-ketoacid dehydrogenase complexes (pyruvate-, alpha-ketoglutarate-, and branched-chain amino acid-dehydrogenase complex) (By similarity). The 2-oxoglutarate dehydrogenase complex is mainly active in the mitochondrion (By similarity). A fraction of the 2-oxoglutarate dehydrogenase complex also localizes in the nucleus and is required for lysine succinylation of histones: associates with KAT2A on chromatin and provides succinyl-CoA to histone succinyltransferase KAT2A (By similarity). In monomeric form may have additional moonlighting function as serine protease (PubMed:17404228). Involved in the hyperactivation of spermatazoa during capacitation and in the spermatazoal acrosome reaction (By similarity).</text>
</comment>
<comment type="catalytic activity">
    <reaction evidence="2">
        <text>N(6)-[(R)-dihydrolipoyl]-L-lysyl-[protein] + NAD(+) = N(6)-[(R)-lipoyl]-L-lysyl-[protein] + NADH + H(+)</text>
        <dbReference type="Rhea" id="RHEA:15045"/>
        <dbReference type="Rhea" id="RHEA-COMP:10474"/>
        <dbReference type="Rhea" id="RHEA-COMP:10475"/>
        <dbReference type="ChEBI" id="CHEBI:15378"/>
        <dbReference type="ChEBI" id="CHEBI:57540"/>
        <dbReference type="ChEBI" id="CHEBI:57945"/>
        <dbReference type="ChEBI" id="CHEBI:83099"/>
        <dbReference type="ChEBI" id="CHEBI:83100"/>
        <dbReference type="EC" id="1.8.1.4"/>
    </reaction>
</comment>
<comment type="cofactor">
    <cofactor evidence="2">
        <name>FAD</name>
        <dbReference type="ChEBI" id="CHEBI:57692"/>
    </cofactor>
    <text evidence="2">Binds 1 FAD per subunit.</text>
</comment>
<comment type="subunit">
    <text evidence="2 8">Homodimer. Part of the multimeric pyruvate dehydrogenase complex that contains multiple copies of pyruvate dehydrogenase (subunits PDHA (PDHA1 or PDHA2) and PDHB, E1), dihydrolipoamide acetyltransferase (DLAT, E2) and lipoamide dehydrogenase (DLD, E3). These subunits are bound to an inner core composed of about 48 DLAT and 12 PDHX molecules (by non covalent bonds). The 2-oxoglutarate dehydrogenase complex is composed of OGDH (2-oxoglutarate dehydrogenase; E1), DLST (dihydrolipoamide succinyltransferase; E2), DLD (dihydrolipoamide dehydrogenase; E3) and the assembly factor KGD4 (PubMed:36854377). It contains multiple copies of the three enzymatic components (E1, E2 and E3). In the nucleus, the 2-oxoglutarate dehydrogenase complex associates with KAT2A. Interacts with PDHX.</text>
</comment>
<comment type="interaction">
    <interactant intactId="EBI-773199">
        <id>O08749</id>
    </interactant>
    <interactant intactId="EBI-6688774">
        <id>O54910</id>
        <label>Nfkbie</label>
    </interactant>
    <organismsDiffer>false</organismsDiffer>
    <experiments>4</experiments>
</comment>
<comment type="subcellular location">
    <subcellularLocation>
        <location evidence="10 11">Mitochondrion matrix</location>
    </subcellularLocation>
    <subcellularLocation>
        <location evidence="2">Nucleus</location>
    </subcellularLocation>
    <subcellularLocation>
        <location evidence="5">Cell projection</location>
        <location evidence="5">Cilium</location>
        <location evidence="5">Flagellum</location>
    </subcellularLocation>
    <subcellularLocation>
        <location evidence="6">Cytoplasmic vesicle</location>
        <location evidence="6">Secretory vesicle</location>
        <location evidence="6">Acrosome</location>
    </subcellularLocation>
    <text evidence="2">Mainly localizes in the mitochondrion. A small fraction localizes to the nucleus, where the 2-oxoglutarate dehydrogenase complex is required for histone succinylation.</text>
</comment>
<comment type="tissue specificity">
    <text evidence="7">Expressed in liver (at protein level).</text>
</comment>
<comment type="PTM">
    <text evidence="5">Tyrosine phosphorylated.</text>
</comment>
<comment type="miscellaneous">
    <text evidence="3">The active site is a redox-active disulfide bond.</text>
</comment>
<comment type="similarity">
    <text evidence="9">Belongs to the class-I pyridine nucleotide-disulfide oxidoreductase family.</text>
</comment>
<name>DLDH_MOUSE</name>
<keyword id="KW-0007">Acetylation</keyword>
<keyword id="KW-0966">Cell projection</keyword>
<keyword id="KW-0969">Cilium</keyword>
<keyword id="KW-0968">Cytoplasmic vesicle</keyword>
<keyword id="KW-0903">Direct protein sequencing</keyword>
<keyword id="KW-1015">Disulfide bond</keyword>
<keyword id="KW-0274">FAD</keyword>
<keyword id="KW-0282">Flagellum</keyword>
<keyword id="KW-0285">Flavoprotein</keyword>
<keyword id="KW-0496">Mitochondrion</keyword>
<keyword id="KW-0520">NAD</keyword>
<keyword id="KW-0539">Nucleus</keyword>
<keyword id="KW-0560">Oxidoreductase</keyword>
<keyword id="KW-0597">Phosphoprotein</keyword>
<keyword id="KW-0676">Redox-active center</keyword>
<keyword id="KW-1185">Reference proteome</keyword>
<keyword id="KW-0809">Transit peptide</keyword>
<sequence length="509" mass="54272">MQSWSRVYRSLAKKGHFNRISHGLQGVSSVPLRTYADQPIEADVTVIGSGPGGYVAAIKSAQLGFKTVCIEKNETLGGTCLNVGCIPSKALLNNSHYYHMAHGKDFASRGIEIPEVRLNLEKMMEQKHSAVKALTGGIAHLFKQNKVVHVNGFGKITGKNQVTATKADGSTQVIDTKNILVATGSEVTPFPGITIDEDTIVSSTGALSLKKVPEKLVVIGAGVIGVELGSVWQRLGADVTAVEFLGHVGGIGIDMEISKNFQRILQRQGFKFKLNTKVTGATKKSDGKIDVSVEAASGGKAEVITCDVLLVCIGRRPFTQNLGLEELGIELDPKGRIPVNNRFQTKIPNIYAIGDVVAGPMLAHKAEDEGIICVEGMAGGAVHIDYNCVPSVIYTHPEVAWVGKSEEQLKEEGIEFKIGKFPFAANSRAKTNADTDGMVKILGHKSTDRVLGAHILGPGAGEMVNEAALALEYGASCEDIARVCHAHPTLSEAFREANLAAAFGKPINF</sequence>